<keyword id="KW-0002">3D-structure</keyword>
<keyword id="KW-0007">Acetylation</keyword>
<keyword id="KW-0903">Direct protein sequencing</keyword>
<keyword id="KW-0349">Heme</keyword>
<keyword id="KW-0408">Iron</keyword>
<keyword id="KW-0479">Metal-binding</keyword>
<keyword id="KW-0561">Oxygen transport</keyword>
<keyword id="KW-0813">Transport</keyword>
<feature type="initiator methionine" description="Removed" evidence="2">
    <location>
        <position position="1"/>
    </location>
</feature>
<feature type="chain" id="PRO_0000052497" description="Globin D, coelomic">
    <location>
        <begin position="2"/>
        <end position="159"/>
    </location>
</feature>
<feature type="domain" description="Globin" evidence="1">
    <location>
        <begin position="12"/>
        <end position="158"/>
    </location>
</feature>
<feature type="binding site" description="distal binding residue">
    <location>
        <position position="74"/>
    </location>
    <ligand>
        <name>heme b</name>
        <dbReference type="ChEBI" id="CHEBI:60344"/>
    </ligand>
    <ligandPart>
        <name>Fe</name>
        <dbReference type="ChEBI" id="CHEBI:18248"/>
    </ligandPart>
</feature>
<feature type="binding site" description="proximal binding residue">
    <location>
        <position position="105"/>
    </location>
    <ligand>
        <name>heme b</name>
        <dbReference type="ChEBI" id="CHEBI:60344"/>
    </ligand>
    <ligandPart>
        <name>Fe</name>
        <dbReference type="ChEBI" id="CHEBI:18248"/>
    </ligandPart>
</feature>
<feature type="modified residue" description="N-acetylglycine" evidence="2">
    <location>
        <position position="2"/>
    </location>
</feature>
<feature type="sequence conflict" description="In Ref. 1; AA sequence." evidence="3" ref="1">
    <original>ATQ</original>
    <variation>QAT</variation>
    <location>
        <begin position="3"/>
        <end position="5"/>
    </location>
</feature>
<feature type="sequence conflict" description="In Ref. 1; AA sequence." evidence="3" ref="1">
    <original>T</original>
    <variation>W</variation>
    <location>
        <position position="49"/>
    </location>
</feature>
<feature type="helix" evidence="4">
    <location>
        <begin position="15"/>
        <end position="28"/>
    </location>
</feature>
<feature type="helix" evidence="4">
    <location>
        <begin position="33"/>
        <end position="43"/>
    </location>
</feature>
<feature type="turn" evidence="4">
    <location>
        <begin position="44"/>
        <end position="46"/>
    </location>
</feature>
<feature type="turn" evidence="4">
    <location>
        <begin position="49"/>
        <end position="52"/>
    </location>
</feature>
<feature type="turn" evidence="4">
    <location>
        <begin position="55"/>
        <end position="59"/>
    </location>
</feature>
<feature type="helix" evidence="4">
    <location>
        <begin position="69"/>
        <end position="87"/>
    </location>
</feature>
<feature type="turn" evidence="4">
    <location>
        <begin position="88"/>
        <end position="90"/>
    </location>
</feature>
<feature type="helix" evidence="4">
    <location>
        <begin position="94"/>
        <end position="108"/>
    </location>
</feature>
<feature type="helix" evidence="4">
    <location>
        <begin position="112"/>
        <end position="125"/>
    </location>
</feature>
<feature type="helix" evidence="4">
    <location>
        <begin position="138"/>
        <end position="149"/>
    </location>
</feature>
<feature type="helix" evidence="4">
    <location>
        <begin position="150"/>
        <end position="153"/>
    </location>
</feature>
<reference key="1">
    <citation type="journal article" date="1991" name="Biochim. Biophys. Acta">
        <title>Amino acid sequence of a globin from the sea cucumber Caudina (Molpadia) arenicola.</title>
        <authorList>
            <person name="Mauri F."/>
            <person name="Omnaas J."/>
            <person name="Davidson L."/>
            <person name="Whitfill C."/>
            <person name="Kitto G.B."/>
        </authorList>
    </citation>
    <scope>PROTEIN SEQUENCE OF 2-159</scope>
    <scope>ACETYLATION AT GLY-2</scope>
    <source>
        <tissue>Coelomic fluid</tissue>
    </source>
</reference>
<reference key="2">
    <citation type="journal article" date="1995" name="Acta Crystallogr. D">
        <title>X-ray structure determination of a dimeric hemoglobin from Caudina arenicola.</title>
        <authorList>
            <person name="Mitchell D.T."/>
            <person name="Ernst S.R."/>
            <person name="Hackert M.L."/>
        </authorList>
    </citation>
    <scope>X-RAY CRYSTALLOGRAPHY (2.9 ANGSTROMS)</scope>
    <scope>SEQUENCE REVISION</scope>
</reference>
<dbReference type="PIR" id="S15979">
    <property type="entry name" value="S15979"/>
</dbReference>
<dbReference type="PDB" id="1HLM">
    <property type="method" value="X-ray"/>
    <property type="resolution" value="2.90 A"/>
    <property type="chains" value="A=2-159"/>
</dbReference>
<dbReference type="PDBsum" id="1HLM"/>
<dbReference type="SMR" id="P80017"/>
<dbReference type="iPTMnet" id="P80017"/>
<dbReference type="EvolutionaryTrace" id="P80017"/>
<dbReference type="GO" id="GO:0020037">
    <property type="term" value="F:heme binding"/>
    <property type="evidence" value="ECO:0007669"/>
    <property type="project" value="InterPro"/>
</dbReference>
<dbReference type="GO" id="GO:0046872">
    <property type="term" value="F:metal ion binding"/>
    <property type="evidence" value="ECO:0007669"/>
    <property type="project" value="UniProtKB-KW"/>
</dbReference>
<dbReference type="GO" id="GO:0019825">
    <property type="term" value="F:oxygen binding"/>
    <property type="evidence" value="ECO:0007669"/>
    <property type="project" value="InterPro"/>
</dbReference>
<dbReference type="GO" id="GO:0005344">
    <property type="term" value="F:oxygen carrier activity"/>
    <property type="evidence" value="ECO:0007669"/>
    <property type="project" value="UniProtKB-KW"/>
</dbReference>
<dbReference type="CDD" id="cd01040">
    <property type="entry name" value="Mb-like"/>
    <property type="match status" value="1"/>
</dbReference>
<dbReference type="Gene3D" id="1.10.490.10">
    <property type="entry name" value="Globins"/>
    <property type="match status" value="1"/>
</dbReference>
<dbReference type="InterPro" id="IPR000971">
    <property type="entry name" value="Globin"/>
</dbReference>
<dbReference type="InterPro" id="IPR009050">
    <property type="entry name" value="Globin-like_sf"/>
</dbReference>
<dbReference type="InterPro" id="IPR012292">
    <property type="entry name" value="Globin/Proto"/>
</dbReference>
<dbReference type="InterPro" id="IPR044399">
    <property type="entry name" value="Mb-like_M"/>
</dbReference>
<dbReference type="PANTHER" id="PTHR47217">
    <property type="entry name" value="GLOBIN-LIKE PROTEIN"/>
    <property type="match status" value="1"/>
</dbReference>
<dbReference type="PANTHER" id="PTHR47217:SF1">
    <property type="entry name" value="GLOBIN-LIKE PROTEIN"/>
    <property type="match status" value="1"/>
</dbReference>
<dbReference type="Pfam" id="PF00042">
    <property type="entry name" value="Globin"/>
    <property type="match status" value="1"/>
</dbReference>
<dbReference type="SUPFAM" id="SSF46458">
    <property type="entry name" value="Globin-like"/>
    <property type="match status" value="1"/>
</dbReference>
<dbReference type="PROSITE" id="PS01033">
    <property type="entry name" value="GLOBIN"/>
    <property type="match status" value="1"/>
</dbReference>
<sequence length="159" mass="17806">MGATQSFQSVGDLTPAEKDLIRSTWDQLMTHRTGFVADVFIRIFHNDPTAQRKFPQMAGLSPAELRTSRQMHAHAIRVSALMTTYIDEMDTEVLPELLATLTRTHDKNHVGKKNYDLFGKVLMEAIKAELGVGFTKQVHDAWAKTFAIVQGVLITKHAS</sequence>
<comment type="subunit">
    <text>Homodimer.</text>
</comment>
<comment type="miscellaneous">
    <text>Caudina arenicola coelomocytes contain four hemoglobin chains labeled A, B, C, D.</text>
</comment>
<comment type="similarity">
    <text evidence="1">Belongs to the globin family.</text>
</comment>
<evidence type="ECO:0000255" key="1">
    <source>
        <dbReference type="PROSITE-ProRule" id="PRU00238"/>
    </source>
</evidence>
<evidence type="ECO:0000269" key="2">
    <source>
    </source>
</evidence>
<evidence type="ECO:0000305" key="3"/>
<evidence type="ECO:0007829" key="4">
    <source>
        <dbReference type="PDB" id="1HLM"/>
    </source>
</evidence>
<accession>P80017</accession>
<proteinExistence type="evidence at protein level"/>
<name>GLBD_MOLAR</name>
<organism>
    <name type="scientific">Molpadia arenicola</name>
    <name type="common">Sea cucumber</name>
    <name type="synonym">Caudina arenicola</name>
    <dbReference type="NCBI Taxonomy" id="7698"/>
    <lineage>
        <taxon>Eukaryota</taxon>
        <taxon>Metazoa</taxon>
        <taxon>Echinodermata</taxon>
        <taxon>Eleutherozoa</taxon>
        <taxon>Echinozoa</taxon>
        <taxon>Holothuroidea</taxon>
        <taxon>Apodacea</taxon>
        <taxon>Molpadida</taxon>
        <taxon>Molpadiidae</taxon>
        <taxon>Molpadia</taxon>
    </lineage>
</organism>
<protein>
    <recommendedName>
        <fullName>Globin D, coelomic</fullName>
    </recommendedName>
</protein>